<evidence type="ECO:0000255" key="1">
    <source>
        <dbReference type="HAMAP-Rule" id="MF_01356"/>
    </source>
</evidence>
<name>NUOB_KLEP7</name>
<gene>
    <name evidence="1" type="primary">nuoB</name>
    <name type="ordered locus">KPN78578_26330</name>
    <name type="ORF">KPN_02677</name>
</gene>
<protein>
    <recommendedName>
        <fullName evidence="1">NADH-quinone oxidoreductase subunit B</fullName>
        <ecNumber evidence="1">7.1.1.-</ecNumber>
    </recommendedName>
    <alternativeName>
        <fullName evidence="1">NADH dehydrogenase I subunit B</fullName>
    </alternativeName>
    <alternativeName>
        <fullName evidence="1">NDH-1 subunit B</fullName>
    </alternativeName>
</protein>
<dbReference type="EC" id="7.1.1.-" evidence="1"/>
<dbReference type="EMBL" id="CP000647">
    <property type="protein sequence ID" value="ABR78094.1"/>
    <property type="molecule type" value="Genomic_DNA"/>
</dbReference>
<dbReference type="RefSeq" id="WP_002913178.1">
    <property type="nucleotide sequence ID" value="NC_009648.1"/>
</dbReference>
<dbReference type="SMR" id="A6TBX3"/>
<dbReference type="STRING" id="272620.KPN_02677"/>
<dbReference type="jPOST" id="A6TBX3"/>
<dbReference type="PaxDb" id="272620-KPN_02677"/>
<dbReference type="EnsemblBacteria" id="ABR78094">
    <property type="protein sequence ID" value="ABR78094"/>
    <property type="gene ID" value="KPN_02677"/>
</dbReference>
<dbReference type="GeneID" id="98389432"/>
<dbReference type="KEGG" id="kpn:KPN_02677"/>
<dbReference type="HOGENOM" id="CLU_055737_7_3_6"/>
<dbReference type="Proteomes" id="UP000000265">
    <property type="component" value="Chromosome"/>
</dbReference>
<dbReference type="GO" id="GO:0005886">
    <property type="term" value="C:plasma membrane"/>
    <property type="evidence" value="ECO:0007669"/>
    <property type="project" value="UniProtKB-SubCell"/>
</dbReference>
<dbReference type="GO" id="GO:0045271">
    <property type="term" value="C:respiratory chain complex I"/>
    <property type="evidence" value="ECO:0007669"/>
    <property type="project" value="TreeGrafter"/>
</dbReference>
<dbReference type="GO" id="GO:0051539">
    <property type="term" value="F:4 iron, 4 sulfur cluster binding"/>
    <property type="evidence" value="ECO:0007669"/>
    <property type="project" value="UniProtKB-KW"/>
</dbReference>
<dbReference type="GO" id="GO:0005506">
    <property type="term" value="F:iron ion binding"/>
    <property type="evidence" value="ECO:0007669"/>
    <property type="project" value="UniProtKB-UniRule"/>
</dbReference>
<dbReference type="GO" id="GO:0008137">
    <property type="term" value="F:NADH dehydrogenase (ubiquinone) activity"/>
    <property type="evidence" value="ECO:0007669"/>
    <property type="project" value="InterPro"/>
</dbReference>
<dbReference type="GO" id="GO:0050136">
    <property type="term" value="F:NADH:ubiquinone reductase (non-electrogenic) activity"/>
    <property type="evidence" value="ECO:0007669"/>
    <property type="project" value="UniProtKB-UniRule"/>
</dbReference>
<dbReference type="GO" id="GO:0048038">
    <property type="term" value="F:quinone binding"/>
    <property type="evidence" value="ECO:0007669"/>
    <property type="project" value="UniProtKB-KW"/>
</dbReference>
<dbReference type="GO" id="GO:0009060">
    <property type="term" value="P:aerobic respiration"/>
    <property type="evidence" value="ECO:0007669"/>
    <property type="project" value="TreeGrafter"/>
</dbReference>
<dbReference type="GO" id="GO:0015990">
    <property type="term" value="P:electron transport coupled proton transport"/>
    <property type="evidence" value="ECO:0007669"/>
    <property type="project" value="TreeGrafter"/>
</dbReference>
<dbReference type="FunFam" id="3.40.50.12280:FF:000002">
    <property type="entry name" value="NADH-quinone oxidoreductase subunit B"/>
    <property type="match status" value="1"/>
</dbReference>
<dbReference type="Gene3D" id="3.40.50.12280">
    <property type="match status" value="1"/>
</dbReference>
<dbReference type="HAMAP" id="MF_01356">
    <property type="entry name" value="NDH1_NuoB"/>
    <property type="match status" value="1"/>
</dbReference>
<dbReference type="InterPro" id="IPR006137">
    <property type="entry name" value="NADH_UbQ_OxRdtase-like_20kDa"/>
</dbReference>
<dbReference type="InterPro" id="IPR006138">
    <property type="entry name" value="NADH_UQ_OxRdtase_20Kd_su"/>
</dbReference>
<dbReference type="NCBIfam" id="TIGR01957">
    <property type="entry name" value="nuoB_fam"/>
    <property type="match status" value="1"/>
</dbReference>
<dbReference type="NCBIfam" id="NF005012">
    <property type="entry name" value="PRK06411.1"/>
    <property type="match status" value="1"/>
</dbReference>
<dbReference type="PANTHER" id="PTHR11995">
    <property type="entry name" value="NADH DEHYDROGENASE"/>
    <property type="match status" value="1"/>
</dbReference>
<dbReference type="PANTHER" id="PTHR11995:SF14">
    <property type="entry name" value="NADH DEHYDROGENASE [UBIQUINONE] IRON-SULFUR PROTEIN 7, MITOCHONDRIAL"/>
    <property type="match status" value="1"/>
</dbReference>
<dbReference type="Pfam" id="PF01058">
    <property type="entry name" value="Oxidored_q6"/>
    <property type="match status" value="1"/>
</dbReference>
<dbReference type="SUPFAM" id="SSF56770">
    <property type="entry name" value="HydA/Nqo6-like"/>
    <property type="match status" value="1"/>
</dbReference>
<dbReference type="PROSITE" id="PS01150">
    <property type="entry name" value="COMPLEX1_20K"/>
    <property type="match status" value="1"/>
</dbReference>
<feature type="chain" id="PRO_0000376258" description="NADH-quinone oxidoreductase subunit B">
    <location>
        <begin position="1"/>
        <end position="224"/>
    </location>
</feature>
<feature type="binding site" evidence="1">
    <location>
        <position position="67"/>
    </location>
    <ligand>
        <name>[4Fe-4S] cluster</name>
        <dbReference type="ChEBI" id="CHEBI:49883"/>
    </ligand>
</feature>
<feature type="binding site" evidence="1">
    <location>
        <position position="68"/>
    </location>
    <ligand>
        <name>[4Fe-4S] cluster</name>
        <dbReference type="ChEBI" id="CHEBI:49883"/>
    </ligand>
</feature>
<feature type="binding site" evidence="1">
    <location>
        <position position="133"/>
    </location>
    <ligand>
        <name>[4Fe-4S] cluster</name>
        <dbReference type="ChEBI" id="CHEBI:49883"/>
    </ligand>
</feature>
<feature type="binding site" evidence="1">
    <location>
        <position position="162"/>
    </location>
    <ligand>
        <name>[4Fe-4S] cluster</name>
        <dbReference type="ChEBI" id="CHEBI:49883"/>
    </ligand>
</feature>
<accession>A6TBX3</accession>
<comment type="function">
    <text evidence="1">NDH-1 shuttles electrons from NADH, via FMN and iron-sulfur (Fe-S) centers, to quinones in the respiratory chain. The immediate electron acceptor for the enzyme in this species is believed to be ubiquinone. Couples the redox reaction to proton translocation (for every two electrons transferred, four hydrogen ions are translocated across the cytoplasmic membrane), and thus conserves the redox energy in a proton gradient.</text>
</comment>
<comment type="catalytic activity">
    <reaction evidence="1">
        <text>a quinone + NADH + 5 H(+)(in) = a quinol + NAD(+) + 4 H(+)(out)</text>
        <dbReference type="Rhea" id="RHEA:57888"/>
        <dbReference type="ChEBI" id="CHEBI:15378"/>
        <dbReference type="ChEBI" id="CHEBI:24646"/>
        <dbReference type="ChEBI" id="CHEBI:57540"/>
        <dbReference type="ChEBI" id="CHEBI:57945"/>
        <dbReference type="ChEBI" id="CHEBI:132124"/>
    </reaction>
</comment>
<comment type="cofactor">
    <cofactor evidence="1">
        <name>[4Fe-4S] cluster</name>
        <dbReference type="ChEBI" id="CHEBI:49883"/>
    </cofactor>
    <text evidence="1">Binds 1 [4Fe-4S] cluster.</text>
</comment>
<comment type="subunit">
    <text evidence="1">NDH-1 is composed of 13 different subunits. Subunits NuoB, CD, E, F, and G constitute the peripheral sector of the complex.</text>
</comment>
<comment type="subcellular location">
    <subcellularLocation>
        <location evidence="1">Cell inner membrane</location>
        <topology evidence="1">Peripheral membrane protein</topology>
        <orientation evidence="1">Cytoplasmic side</orientation>
    </subcellularLocation>
</comment>
<comment type="similarity">
    <text evidence="1">Belongs to the complex I 20 kDa subunit family.</text>
</comment>
<keyword id="KW-0004">4Fe-4S</keyword>
<keyword id="KW-0997">Cell inner membrane</keyword>
<keyword id="KW-1003">Cell membrane</keyword>
<keyword id="KW-0408">Iron</keyword>
<keyword id="KW-0411">Iron-sulfur</keyword>
<keyword id="KW-0472">Membrane</keyword>
<keyword id="KW-0479">Metal-binding</keyword>
<keyword id="KW-0520">NAD</keyword>
<keyword id="KW-0874">Quinone</keyword>
<keyword id="KW-1278">Translocase</keyword>
<keyword id="KW-0813">Transport</keyword>
<keyword id="KW-0830">Ubiquinone</keyword>
<reference key="1">
    <citation type="submission" date="2006-09" db="EMBL/GenBank/DDBJ databases">
        <authorList>
            <consortium name="The Klebsiella pneumonia Genome Sequencing Project"/>
            <person name="McClelland M."/>
            <person name="Sanderson E.K."/>
            <person name="Spieth J."/>
            <person name="Clifton W.S."/>
            <person name="Latreille P."/>
            <person name="Sabo A."/>
            <person name="Pepin K."/>
            <person name="Bhonagiri V."/>
            <person name="Porwollik S."/>
            <person name="Ali J."/>
            <person name="Wilson R.K."/>
        </authorList>
    </citation>
    <scope>NUCLEOTIDE SEQUENCE [LARGE SCALE GENOMIC DNA]</scope>
    <source>
        <strain>ATCC 700721 / MGH 78578</strain>
    </source>
</reference>
<proteinExistence type="inferred from homology"/>
<organism>
    <name type="scientific">Klebsiella pneumoniae subsp. pneumoniae (strain ATCC 700721 / MGH 78578)</name>
    <dbReference type="NCBI Taxonomy" id="272620"/>
    <lineage>
        <taxon>Bacteria</taxon>
        <taxon>Pseudomonadati</taxon>
        <taxon>Pseudomonadota</taxon>
        <taxon>Gammaproteobacteria</taxon>
        <taxon>Enterobacterales</taxon>
        <taxon>Enterobacteriaceae</taxon>
        <taxon>Klebsiella/Raoultella group</taxon>
        <taxon>Klebsiella</taxon>
        <taxon>Klebsiella pneumoniae complex</taxon>
    </lineage>
</organism>
<sequence>MDYTLTRIDPNGENDRYPLQKQEIVTDPLEQEVNKSVYMGKLEHALHDMVNWGRKNSIWPYNFGLSCCYVEMVTSFTAVHDVARFGAEVLRASPRQADLMVVAGTCFTKMAPVIQRLYDQMLEPKWVISMGACANSGGMYDIYSVVQGVDKFIPVDVYIPGCPPRPEAYMQALMLLQESIGKERRPLSWVVGDQGVYRANMQSERERKRGERIAVTNLRTPDEI</sequence>